<accession>Q1RCS3</accession>
<keyword id="KW-0131">Cell cycle</keyword>
<keyword id="KW-0132">Cell division</keyword>
<dbReference type="EMBL" id="CP000243">
    <property type="protein sequence ID" value="ABE06841.1"/>
    <property type="molecule type" value="Genomic_DNA"/>
</dbReference>
<dbReference type="RefSeq" id="WP_001185665.1">
    <property type="nucleotide sequence ID" value="NZ_CP064825.1"/>
</dbReference>
<dbReference type="SMR" id="Q1RCS3"/>
<dbReference type="GeneID" id="93776260"/>
<dbReference type="KEGG" id="eci:UTI89_C1359"/>
<dbReference type="HOGENOM" id="CLU_137929_2_2_6"/>
<dbReference type="Proteomes" id="UP000001952">
    <property type="component" value="Chromosome"/>
</dbReference>
<dbReference type="GO" id="GO:0051301">
    <property type="term" value="P:cell division"/>
    <property type="evidence" value="ECO:0007669"/>
    <property type="project" value="UniProtKB-KW"/>
</dbReference>
<dbReference type="GO" id="GO:0032955">
    <property type="term" value="P:regulation of division septum assembly"/>
    <property type="evidence" value="ECO:0007669"/>
    <property type="project" value="InterPro"/>
</dbReference>
<dbReference type="FunFam" id="3.30.1070.10:FF:000001">
    <property type="entry name" value="Cell division topological specificity factor"/>
    <property type="match status" value="1"/>
</dbReference>
<dbReference type="Gene3D" id="3.30.1070.10">
    <property type="entry name" value="Cell division topological specificity factor MinE"/>
    <property type="match status" value="1"/>
</dbReference>
<dbReference type="HAMAP" id="MF_00262">
    <property type="entry name" value="MinE"/>
    <property type="match status" value="1"/>
</dbReference>
<dbReference type="InterPro" id="IPR005527">
    <property type="entry name" value="MinE"/>
</dbReference>
<dbReference type="InterPro" id="IPR036707">
    <property type="entry name" value="MinE_sf"/>
</dbReference>
<dbReference type="NCBIfam" id="TIGR01215">
    <property type="entry name" value="minE"/>
    <property type="match status" value="1"/>
</dbReference>
<dbReference type="NCBIfam" id="NF001422">
    <property type="entry name" value="PRK00296.1"/>
    <property type="match status" value="1"/>
</dbReference>
<dbReference type="Pfam" id="PF03776">
    <property type="entry name" value="MinE"/>
    <property type="match status" value="1"/>
</dbReference>
<dbReference type="SUPFAM" id="SSF55229">
    <property type="entry name" value="Cell division protein MinE topological specificity domain"/>
    <property type="match status" value="1"/>
</dbReference>
<feature type="chain" id="PRO_0000298111" description="Cell division topological specificity factor">
    <location>
        <begin position="1"/>
        <end position="88"/>
    </location>
</feature>
<gene>
    <name evidence="1" type="primary">minE</name>
    <name type="ordered locus">UTI89_C1359</name>
</gene>
<sequence>MALLDFFLSRKKNTANIAKERLQIIVAERRRSDAEPHYLPQLRKDILEVICKYVQIDPEMVTVQLEQKDGDISILELNVTLPEAEELK</sequence>
<protein>
    <recommendedName>
        <fullName evidence="1">Cell division topological specificity factor</fullName>
    </recommendedName>
</protein>
<name>MINE_ECOUT</name>
<proteinExistence type="inferred from homology"/>
<comment type="function">
    <text evidence="1">Prevents the cell division inhibition by proteins MinC and MinD at internal division sites while permitting inhibition at polar sites. This ensures cell division at the proper site by restricting the formation of a division septum at the midpoint of the long axis of the cell.</text>
</comment>
<comment type="similarity">
    <text evidence="1">Belongs to the MinE family.</text>
</comment>
<reference key="1">
    <citation type="journal article" date="2006" name="Proc. Natl. Acad. Sci. U.S.A.">
        <title>Identification of genes subject to positive selection in uropathogenic strains of Escherichia coli: a comparative genomics approach.</title>
        <authorList>
            <person name="Chen S.L."/>
            <person name="Hung C.-S."/>
            <person name="Xu J."/>
            <person name="Reigstad C.S."/>
            <person name="Magrini V."/>
            <person name="Sabo A."/>
            <person name="Blasiar D."/>
            <person name="Bieri T."/>
            <person name="Meyer R.R."/>
            <person name="Ozersky P."/>
            <person name="Armstrong J.R."/>
            <person name="Fulton R.S."/>
            <person name="Latreille J.P."/>
            <person name="Spieth J."/>
            <person name="Hooton T.M."/>
            <person name="Mardis E.R."/>
            <person name="Hultgren S.J."/>
            <person name="Gordon J.I."/>
        </authorList>
    </citation>
    <scope>NUCLEOTIDE SEQUENCE [LARGE SCALE GENOMIC DNA]</scope>
    <source>
        <strain>UTI89 / UPEC</strain>
    </source>
</reference>
<evidence type="ECO:0000255" key="1">
    <source>
        <dbReference type="HAMAP-Rule" id="MF_00262"/>
    </source>
</evidence>
<organism>
    <name type="scientific">Escherichia coli (strain UTI89 / UPEC)</name>
    <dbReference type="NCBI Taxonomy" id="364106"/>
    <lineage>
        <taxon>Bacteria</taxon>
        <taxon>Pseudomonadati</taxon>
        <taxon>Pseudomonadota</taxon>
        <taxon>Gammaproteobacteria</taxon>
        <taxon>Enterobacterales</taxon>
        <taxon>Enterobacteriaceae</taxon>
        <taxon>Escherichia</taxon>
    </lineage>
</organism>